<comment type="function">
    <text evidence="1 2">Component of the viral envelope that plays a central role in virus morphogenesis and assembly via its interactions with other viral proteins.</text>
</comment>
<comment type="subunit">
    <text evidence="1 2">Homomultimer. Interacts with envelope E protein in the budding compartment of the host cell, which is located between endoplasmic reticulum and the Golgi complex. Forms a complex with HE and S proteins. Interacts with nucleocapsid N protein. This interaction probably participates in RNA packaging into the virus.</text>
</comment>
<comment type="subcellular location">
    <subcellularLocation>
        <location evidence="1">Virion membrane</location>
        <topology evidence="1">Multi-pass membrane protein</topology>
    </subcellularLocation>
    <subcellularLocation>
        <location evidence="1">Host Golgi apparatus membrane</location>
        <topology evidence="1">Multi-pass membrane protein</topology>
    </subcellularLocation>
    <text evidence="1">Largely embedded in the lipid bilayer.</text>
</comment>
<comment type="similarity">
    <text evidence="1">Belongs to the alphacoronaviruses M protein family.</text>
</comment>
<gene>
    <name evidence="1" type="primary">M</name>
    <name type="ORF">5</name>
</gene>
<proteinExistence type="inferred from homology"/>
<evidence type="ECO:0000255" key="1">
    <source>
        <dbReference type="HAMAP-Rule" id="MF_04201"/>
    </source>
</evidence>
<evidence type="ECO:0000255" key="2">
    <source>
        <dbReference type="PROSITE-ProRule" id="PRU01275"/>
    </source>
</evidence>
<organismHost>
    <name type="scientific">Sus scrofa</name>
    <name type="common">Pig</name>
    <dbReference type="NCBI Taxonomy" id="9823"/>
</organismHost>
<protein>
    <recommendedName>
        <fullName evidence="1">Membrane protein</fullName>
        <shortName evidence="1">M protein</shortName>
    </recommendedName>
    <alternativeName>
        <fullName evidence="1">E1 glycoprotein</fullName>
    </alternativeName>
    <alternativeName>
        <fullName evidence="1">Matrix glycoprotein</fullName>
    </alternativeName>
    <alternativeName>
        <fullName evidence="1">Membrane glycoprotein</fullName>
    </alternativeName>
</protein>
<dbReference type="EMBL" id="Z24733">
    <property type="protein sequence ID" value="CAA80857.1"/>
    <property type="molecule type" value="Genomic_RNA"/>
</dbReference>
<dbReference type="EMBL" id="AF353511">
    <property type="protein sequence ID" value="AAK38659.1"/>
    <property type="molecule type" value="Genomic_RNA"/>
</dbReference>
<dbReference type="EMBL" id="Z14976">
    <property type="protein sequence ID" value="CAA78699.1"/>
    <property type="molecule type" value="Genomic_RNA"/>
</dbReference>
<dbReference type="PIR" id="S37434">
    <property type="entry name" value="S37434"/>
</dbReference>
<dbReference type="RefSeq" id="NP_598313.1">
    <property type="nucleotide sequence ID" value="NC_003436.1"/>
</dbReference>
<dbReference type="SMR" id="P59771"/>
<dbReference type="ABCD" id="P59771">
    <property type="antibodies" value="4 sequenced antibodies"/>
</dbReference>
<dbReference type="KEGG" id="vg:935182"/>
<dbReference type="Proteomes" id="UP000008159">
    <property type="component" value="Segment"/>
</dbReference>
<dbReference type="GO" id="GO:0044178">
    <property type="term" value="C:host cell Golgi membrane"/>
    <property type="evidence" value="ECO:0007669"/>
    <property type="project" value="UniProtKB-SubCell"/>
</dbReference>
<dbReference type="GO" id="GO:0016020">
    <property type="term" value="C:membrane"/>
    <property type="evidence" value="ECO:0007669"/>
    <property type="project" value="UniProtKB-UniRule"/>
</dbReference>
<dbReference type="GO" id="GO:0019031">
    <property type="term" value="C:viral envelope"/>
    <property type="evidence" value="ECO:0007669"/>
    <property type="project" value="UniProtKB-UniRule"/>
</dbReference>
<dbReference type="GO" id="GO:0055036">
    <property type="term" value="C:virion membrane"/>
    <property type="evidence" value="ECO:0007669"/>
    <property type="project" value="UniProtKB-SubCell"/>
</dbReference>
<dbReference type="GO" id="GO:0039660">
    <property type="term" value="F:structural constituent of virion"/>
    <property type="evidence" value="ECO:0007669"/>
    <property type="project" value="UniProtKB-UniRule"/>
</dbReference>
<dbReference type="CDD" id="cd21564">
    <property type="entry name" value="alphaCoV_M"/>
    <property type="match status" value="1"/>
</dbReference>
<dbReference type="HAMAP" id="MF_04201">
    <property type="entry name" value="ALPHA_CORONA_M"/>
    <property type="match status" value="1"/>
</dbReference>
<dbReference type="InterPro" id="IPR042551">
    <property type="entry name" value="ALPHA_CORONA_M"/>
</dbReference>
<dbReference type="InterPro" id="IPR002574">
    <property type="entry name" value="M_CoV"/>
</dbReference>
<dbReference type="Pfam" id="PF01635">
    <property type="entry name" value="CoV_M"/>
    <property type="match status" value="1"/>
</dbReference>
<dbReference type="PROSITE" id="PS51927">
    <property type="entry name" value="COV_M"/>
    <property type="match status" value="1"/>
</dbReference>
<keyword id="KW-0325">Glycoprotein</keyword>
<keyword id="KW-1040">Host Golgi apparatus</keyword>
<keyword id="KW-1043">Host membrane</keyword>
<keyword id="KW-0472">Membrane</keyword>
<keyword id="KW-0812">Transmembrane</keyword>
<keyword id="KW-1133">Transmembrane helix</keyword>
<keyword id="KW-0261">Viral envelope protein</keyword>
<keyword id="KW-0468">Viral matrix protein</keyword>
<keyword id="KW-0946">Virion</keyword>
<organism>
    <name type="scientific">Porcine epidemic diarrhea virus (strain CV777)</name>
    <name type="common">PEDV</name>
    <dbReference type="NCBI Taxonomy" id="229032"/>
    <lineage>
        <taxon>Viruses</taxon>
        <taxon>Riboviria</taxon>
        <taxon>Orthornavirae</taxon>
        <taxon>Pisuviricota</taxon>
        <taxon>Pisoniviricetes</taxon>
        <taxon>Nidovirales</taxon>
        <taxon>Cornidovirineae</taxon>
        <taxon>Coronaviridae</taxon>
        <taxon>Orthocoronavirinae</taxon>
        <taxon>Alphacoronavirus</taxon>
        <taxon>Pedacovirus</taxon>
        <taxon>Porcine epidemic diarrhea virus</taxon>
    </lineage>
</organism>
<name>VME1_PEDV7</name>
<feature type="chain" id="PRO_0000106040" description="Membrane protein">
    <location>
        <begin position="1"/>
        <end position="226"/>
    </location>
</feature>
<feature type="topological domain" description="Virion surface" evidence="1">
    <location>
        <begin position="1"/>
        <end position="11"/>
    </location>
</feature>
<feature type="transmembrane region" description="Helical" evidence="1">
    <location>
        <begin position="12"/>
        <end position="32"/>
    </location>
</feature>
<feature type="topological domain" description="Intravirion" evidence="1">
    <location>
        <begin position="33"/>
        <end position="41"/>
    </location>
</feature>
<feature type="transmembrane region" description="Helical" evidence="1">
    <location>
        <begin position="42"/>
        <end position="62"/>
    </location>
</feature>
<feature type="topological domain" description="Virion surface" evidence="1">
    <location>
        <begin position="63"/>
        <end position="75"/>
    </location>
</feature>
<feature type="transmembrane region" description="Helical" evidence="1">
    <location>
        <begin position="76"/>
        <end position="96"/>
    </location>
</feature>
<feature type="topological domain" description="Intravirion" evidence="1">
    <location>
        <begin position="97"/>
        <end position="226"/>
    </location>
</feature>
<feature type="region of interest" description="Interaction with N protein" evidence="1">
    <location>
        <begin position="200"/>
        <end position="216"/>
    </location>
</feature>
<feature type="sequence variant">
    <original>F</original>
    <variation>L</variation>
    <location>
        <position position="150"/>
    </location>
</feature>
<accession>P59771</accession>
<accession>Q07504</accession>
<accession>Q91AU9</accession>
<reference key="1">
    <citation type="journal article" date="1994" name="Virology">
        <title>Sequence analysis of the porcine epidemic diarrhea virus genome between the nucleocapsid and spike protein genes reveals a polymorphic ORF.</title>
        <authorList>
            <person name="Duarte M."/>
            <person name="Tobler K."/>
            <person name="Bridgen A."/>
            <person name="Rasschaert D."/>
            <person name="Ackermann M."/>
            <person name="Laude H."/>
        </authorList>
    </citation>
    <scope>NUCLEOTIDE SEQUENCE [GENOMIC RNA]</scope>
</reference>
<reference key="2">
    <citation type="journal article" date="1998" name="Adv. Exp. Med. Biol.">
        <title>Further analysis of the genome of porcine epidemic diarrhea virus.</title>
        <authorList>
            <person name="Bridgen A."/>
            <person name="Kocherhans R."/>
            <person name="Tobler K."/>
            <person name="Carvajal A."/>
            <person name="Ackermann M."/>
        </authorList>
    </citation>
    <scope>NUCLEOTIDE SEQUENCE [GENOMIC RNA]</scope>
</reference>
<reference key="3">
    <citation type="journal article" date="2001" name="Virus Genes">
        <title>Completion of the porcine epidemic diarrhoea coronavirus (PEDV) genome sequence.</title>
        <authorList>
            <person name="Kocherhans R."/>
            <person name="Bridgen A."/>
            <person name="Ackermann M."/>
            <person name="Tobler K."/>
        </authorList>
    </citation>
    <scope>NUCLEOTIDE SEQUENCE [GENOMIC RNA]</scope>
</reference>
<reference key="4">
    <citation type="journal article" date="1993" name="J. Gen. Virol.">
        <title>Sequence determination of the nucleocapsid protein gene of the porcine epidemic diarrhea virus confirms that this virus is a coronavirus related to human coronavirus 229E and porcine transmissible gastroenteritis virus.</title>
        <authorList>
            <person name="Bridgen A."/>
            <person name="Duarte M."/>
            <person name="Tobler K."/>
            <person name="Laude H."/>
            <person name="Ackermann M."/>
        </authorList>
    </citation>
    <scope>NUCLEOTIDE SEQUENCE [GENOMIC RNA] OF 220-226</scope>
</reference>
<sequence>MSNGSIPVDEVIEHLRNWNFTWNIILTILLVVLQYGHYKYSVFLYGVKMAILWILWPLVLALSLFDAWASFQVNWVFFAFSILMACITLMLWIMYFVNSIRLWRRTHSWWSFNPETDALLTTSVMGRQVCIPVLGAPTGVTLTLLSGTLFVEGYKVATGVQVSQLPNFVTVAKATTTIVYGRVGRSVNASSGTGWAFYVRSKHGDYSAVSNPSAVLTDSEKVLHLV</sequence>